<feature type="chain" id="PRO_0000318800" description="Carboxy-S-adenosyl-L-methionine synthase">
    <location>
        <begin position="1"/>
        <end position="252"/>
    </location>
</feature>
<feature type="binding site" evidence="1">
    <location>
        <position position="45"/>
    </location>
    <ligand>
        <name>S-adenosyl-L-methionine</name>
        <dbReference type="ChEBI" id="CHEBI:59789"/>
    </ligand>
</feature>
<feature type="binding site" evidence="1">
    <location>
        <begin position="70"/>
        <end position="72"/>
    </location>
    <ligand>
        <name>S-adenosyl-L-methionine</name>
        <dbReference type="ChEBI" id="CHEBI:59789"/>
    </ligand>
</feature>
<feature type="binding site" evidence="1">
    <location>
        <begin position="95"/>
        <end position="96"/>
    </location>
    <ligand>
        <name>S-adenosyl-L-methionine</name>
        <dbReference type="ChEBI" id="CHEBI:59789"/>
    </ligand>
</feature>
<feature type="binding site" evidence="1">
    <location>
        <begin position="127"/>
        <end position="128"/>
    </location>
    <ligand>
        <name>S-adenosyl-L-methionine</name>
        <dbReference type="ChEBI" id="CHEBI:59789"/>
    </ligand>
</feature>
<feature type="binding site" evidence="1">
    <location>
        <position position="142"/>
    </location>
    <ligand>
        <name>S-adenosyl-L-methionine</name>
        <dbReference type="ChEBI" id="CHEBI:59789"/>
    </ligand>
</feature>
<feature type="binding site" evidence="1">
    <location>
        <position position="209"/>
    </location>
    <ligand>
        <name>S-adenosyl-L-methionine</name>
        <dbReference type="ChEBI" id="CHEBI:59789"/>
    </ligand>
</feature>
<name>CMOA_PSEP7</name>
<organism>
    <name type="scientific">Pseudomonas paraeruginosa (strain DSM 24068 / PA7)</name>
    <name type="common">Pseudomonas aeruginosa (strain PA7)</name>
    <dbReference type="NCBI Taxonomy" id="381754"/>
    <lineage>
        <taxon>Bacteria</taxon>
        <taxon>Pseudomonadati</taxon>
        <taxon>Pseudomonadota</taxon>
        <taxon>Gammaproteobacteria</taxon>
        <taxon>Pseudomonadales</taxon>
        <taxon>Pseudomonadaceae</taxon>
        <taxon>Pseudomonas</taxon>
        <taxon>Pseudomonas paraeruginosa</taxon>
    </lineage>
</organism>
<accession>A6VAK1</accession>
<gene>
    <name evidence="1" type="primary">cmoA</name>
    <name type="ordered locus">PSPA7_4744</name>
</gene>
<keyword id="KW-0949">S-adenosyl-L-methionine</keyword>
<keyword id="KW-0808">Transferase</keyword>
<comment type="function">
    <text evidence="1">Catalyzes the conversion of S-adenosyl-L-methionine (SAM) to carboxy-S-adenosyl-L-methionine (Cx-SAM).</text>
</comment>
<comment type="catalytic activity">
    <reaction evidence="1">
        <text>prephenate + S-adenosyl-L-methionine = carboxy-S-adenosyl-L-methionine + 3-phenylpyruvate + H2O</text>
        <dbReference type="Rhea" id="RHEA:51692"/>
        <dbReference type="ChEBI" id="CHEBI:15377"/>
        <dbReference type="ChEBI" id="CHEBI:18005"/>
        <dbReference type="ChEBI" id="CHEBI:29934"/>
        <dbReference type="ChEBI" id="CHEBI:59789"/>
        <dbReference type="ChEBI" id="CHEBI:134278"/>
    </reaction>
</comment>
<comment type="subunit">
    <text evidence="1">Homodimer.</text>
</comment>
<comment type="similarity">
    <text evidence="1">Belongs to the class I-like SAM-binding methyltransferase superfamily. Cx-SAM synthase family.</text>
</comment>
<proteinExistence type="inferred from homology"/>
<sequence>MPEVTRVSESDRLFAQPQQRVADFVFNEDVVRVFPDMIKRSVPGYPTIVENIGVLGAQFARPHSVLYDLGCSLGAVTQSLRRHVRSDGCRVIGVDNSHAMIERCGEYLHAQDAMYQELLPVELIEADILALELQPTSLVAMNFTLQFVAPDQRLGLLRNIRRALLPGGALILSEKLRFADAQEHALLTDLHIAFKRANGYSELEIAQKRSALENVMLPDTFEEHRERLLAAGFSRVSQWFQCLNFASMIALP</sequence>
<evidence type="ECO:0000255" key="1">
    <source>
        <dbReference type="HAMAP-Rule" id="MF_01589"/>
    </source>
</evidence>
<reference key="1">
    <citation type="submission" date="2007-06" db="EMBL/GenBank/DDBJ databases">
        <authorList>
            <person name="Dodson R.J."/>
            <person name="Harkins D."/>
            <person name="Paulsen I.T."/>
        </authorList>
    </citation>
    <scope>NUCLEOTIDE SEQUENCE [LARGE SCALE GENOMIC DNA]</scope>
    <source>
        <strain>DSM 24068 / PA7</strain>
    </source>
</reference>
<dbReference type="EC" id="2.1.3.-" evidence="1"/>
<dbReference type="EMBL" id="CP000744">
    <property type="protein sequence ID" value="ABR82897.1"/>
    <property type="molecule type" value="Genomic_DNA"/>
</dbReference>
<dbReference type="SMR" id="A6VAK1"/>
<dbReference type="KEGG" id="pap:PSPA7_4744"/>
<dbReference type="HOGENOM" id="CLU_078475_0_0_6"/>
<dbReference type="Proteomes" id="UP000001582">
    <property type="component" value="Chromosome"/>
</dbReference>
<dbReference type="GO" id="GO:0016743">
    <property type="term" value="F:carboxyl- or carbamoyltransferase activity"/>
    <property type="evidence" value="ECO:0007669"/>
    <property type="project" value="UniProtKB-UniRule"/>
</dbReference>
<dbReference type="GO" id="GO:1904047">
    <property type="term" value="F:S-adenosyl-L-methionine binding"/>
    <property type="evidence" value="ECO:0007669"/>
    <property type="project" value="UniProtKB-UniRule"/>
</dbReference>
<dbReference type="GO" id="GO:0002098">
    <property type="term" value="P:tRNA wobble uridine modification"/>
    <property type="evidence" value="ECO:0007669"/>
    <property type="project" value="InterPro"/>
</dbReference>
<dbReference type="CDD" id="cd02440">
    <property type="entry name" value="AdoMet_MTases"/>
    <property type="match status" value="1"/>
</dbReference>
<dbReference type="Gene3D" id="3.40.50.150">
    <property type="entry name" value="Vaccinia Virus protein VP39"/>
    <property type="match status" value="1"/>
</dbReference>
<dbReference type="HAMAP" id="MF_01589">
    <property type="entry name" value="Cx_SAM_synthase"/>
    <property type="match status" value="1"/>
</dbReference>
<dbReference type="InterPro" id="IPR005271">
    <property type="entry name" value="CmoA"/>
</dbReference>
<dbReference type="InterPro" id="IPR041698">
    <property type="entry name" value="Methyltransf_25"/>
</dbReference>
<dbReference type="InterPro" id="IPR029063">
    <property type="entry name" value="SAM-dependent_MTases_sf"/>
</dbReference>
<dbReference type="NCBIfam" id="TIGR00740">
    <property type="entry name" value="carboxy-S-adenosyl-L-methionine synthase CmoA"/>
    <property type="match status" value="1"/>
</dbReference>
<dbReference type="PANTHER" id="PTHR43861:SF2">
    <property type="entry name" value="CARBOXY-S-ADENOSYL-L-METHIONINE SYNTHASE"/>
    <property type="match status" value="1"/>
</dbReference>
<dbReference type="PANTHER" id="PTHR43861">
    <property type="entry name" value="TRANS-ACONITATE 2-METHYLTRANSFERASE-RELATED"/>
    <property type="match status" value="1"/>
</dbReference>
<dbReference type="Pfam" id="PF13649">
    <property type="entry name" value="Methyltransf_25"/>
    <property type="match status" value="1"/>
</dbReference>
<dbReference type="PIRSF" id="PIRSF006325">
    <property type="entry name" value="MeTrfase_bac"/>
    <property type="match status" value="1"/>
</dbReference>
<dbReference type="SUPFAM" id="SSF53335">
    <property type="entry name" value="S-adenosyl-L-methionine-dependent methyltransferases"/>
    <property type="match status" value="1"/>
</dbReference>
<protein>
    <recommendedName>
        <fullName evidence="1">Carboxy-S-adenosyl-L-methionine synthase</fullName>
        <shortName evidence="1">Cx-SAM synthase</shortName>
        <ecNumber evidence="1">2.1.3.-</ecNumber>
    </recommendedName>
</protein>